<reference key="1">
    <citation type="journal article" date="1979" name="J. Biochem.">
        <title>Amino acid sequences of the alpha and beta chains of adult hemoglobin of the brown lemur, Lemur fulvus fulvus.</title>
        <authorList>
            <person name="Maita T."/>
            <person name="Setoguchi M."/>
            <person name="Matsuda G."/>
            <person name="Goodman M."/>
        </authorList>
    </citation>
    <scope>PROTEIN SEQUENCE</scope>
</reference>
<keyword id="KW-0903">Direct protein sequencing</keyword>
<keyword id="KW-0349">Heme</keyword>
<keyword id="KW-0408">Iron</keyword>
<keyword id="KW-0479">Metal-binding</keyword>
<keyword id="KW-0561">Oxygen transport</keyword>
<keyword id="KW-0597">Phosphoprotein</keyword>
<keyword id="KW-0813">Transport</keyword>
<sequence>VLSPADKTNVKTAWNAVGGQAGEHGAEALERMFLSFPTTKTYFPHFDLSHGSGQVKAHGKKVADALTNAVSHLDDMPGALSALSDLHAHKLRVDPVNFKLLSHCLLVTLASHHPAEFTPAVHASLDKFFAAVSTVLTSKYR</sequence>
<accession>P01936</accession>
<comment type="function">
    <text>Involved in oxygen transport from the lung to the various peripheral tissues.</text>
</comment>
<comment type="function">
    <molecule>Hemopressin</molecule>
    <text evidence="2">Hemopressin acts as an antagonist peptide of the cannabinoid receptor CNR1. Hemopressin-binding efficiently blocks cannabinoid receptor CNR1 and subsequent signaling.</text>
</comment>
<comment type="subunit">
    <text>Heterotetramer of two alpha chains and two beta chains.</text>
</comment>
<comment type="tissue specificity">
    <text>Red blood cells.</text>
</comment>
<comment type="similarity">
    <text evidence="4">Belongs to the globin family.</text>
</comment>
<proteinExistence type="evidence at protein level"/>
<feature type="chain" id="PRO_0000052663" description="Hemoglobin subunit alpha">
    <location>
        <begin position="1"/>
        <end position="141"/>
    </location>
</feature>
<feature type="peptide" id="PRO_0000455889" description="Hemopressin" evidence="2">
    <location>
        <begin position="95"/>
        <end position="103"/>
    </location>
</feature>
<feature type="domain" description="Globin" evidence="4">
    <location>
        <begin position="1"/>
        <end position="141"/>
    </location>
</feature>
<feature type="binding site" evidence="4">
    <location>
        <position position="58"/>
    </location>
    <ligand>
        <name>O2</name>
        <dbReference type="ChEBI" id="CHEBI:15379"/>
    </ligand>
</feature>
<feature type="binding site" description="proximal binding residue" evidence="4">
    <location>
        <position position="87"/>
    </location>
    <ligand>
        <name>heme b</name>
        <dbReference type="ChEBI" id="CHEBI:60344"/>
    </ligand>
    <ligandPart>
        <name>Fe</name>
        <dbReference type="ChEBI" id="CHEBI:18248"/>
    </ligandPart>
</feature>
<feature type="modified residue" description="Phosphoserine" evidence="3">
    <location>
        <position position="3"/>
    </location>
</feature>
<feature type="modified residue" description="N6-succinyllysine" evidence="1">
    <location>
        <position position="7"/>
    </location>
</feature>
<feature type="modified residue" description="Phosphothreonine" evidence="3">
    <location>
        <position position="8"/>
    </location>
</feature>
<feature type="modified residue" description="N6-succinyllysine" evidence="1">
    <location>
        <position position="11"/>
    </location>
</feature>
<feature type="modified residue" description="Phosphoserine" evidence="3">
    <location>
        <position position="35"/>
    </location>
</feature>
<feature type="modified residue" description="N6-succinyllysine" evidence="1">
    <location>
        <position position="40"/>
    </location>
</feature>
<feature type="modified residue" description="Phosphoserine" evidence="3">
    <location>
        <position position="49"/>
    </location>
</feature>
<feature type="modified residue" description="Phosphoserine" evidence="1">
    <location>
        <position position="102"/>
    </location>
</feature>
<feature type="modified residue" description="Phosphothreonine" evidence="1">
    <location>
        <position position="108"/>
    </location>
</feature>
<feature type="modified residue" description="Phosphoserine" evidence="1">
    <location>
        <position position="124"/>
    </location>
</feature>
<feature type="modified residue" description="Phosphothreonine" evidence="1">
    <location>
        <position position="134"/>
    </location>
</feature>
<feature type="modified residue" description="Phosphothreonine" evidence="1">
    <location>
        <position position="137"/>
    </location>
</feature>
<feature type="modified residue" description="Phosphoserine" evidence="1">
    <location>
        <position position="138"/>
    </location>
</feature>
<organism>
    <name type="scientific">Eulemur fulvus fulvus</name>
    <name type="common">Brown lemur</name>
    <dbReference type="NCBI Taxonomy" id="40322"/>
    <lineage>
        <taxon>Eukaryota</taxon>
        <taxon>Metazoa</taxon>
        <taxon>Chordata</taxon>
        <taxon>Craniata</taxon>
        <taxon>Vertebrata</taxon>
        <taxon>Euteleostomi</taxon>
        <taxon>Mammalia</taxon>
        <taxon>Eutheria</taxon>
        <taxon>Euarchontoglires</taxon>
        <taxon>Primates</taxon>
        <taxon>Strepsirrhini</taxon>
        <taxon>Lemuriformes</taxon>
        <taxon>Lemuridae</taxon>
        <taxon>Eulemur</taxon>
    </lineage>
</organism>
<gene>
    <name type="primary">HBA</name>
</gene>
<protein>
    <recommendedName>
        <fullName>Hemoglobin subunit alpha</fullName>
    </recommendedName>
    <alternativeName>
        <fullName>Alpha-globin</fullName>
    </alternativeName>
    <alternativeName>
        <fullName>Hemoglobin alpha chain</fullName>
    </alternativeName>
    <component>
        <recommendedName>
            <fullName evidence="2">Hemopressin</fullName>
        </recommendedName>
    </component>
</protein>
<dbReference type="PIR" id="A02259">
    <property type="entry name" value="HALEF"/>
</dbReference>
<dbReference type="SMR" id="P01936"/>
<dbReference type="GO" id="GO:0072562">
    <property type="term" value="C:blood microparticle"/>
    <property type="evidence" value="ECO:0007669"/>
    <property type="project" value="TreeGrafter"/>
</dbReference>
<dbReference type="GO" id="GO:0031838">
    <property type="term" value="C:haptoglobin-hemoglobin complex"/>
    <property type="evidence" value="ECO:0007669"/>
    <property type="project" value="TreeGrafter"/>
</dbReference>
<dbReference type="GO" id="GO:0005833">
    <property type="term" value="C:hemoglobin complex"/>
    <property type="evidence" value="ECO:0007669"/>
    <property type="project" value="InterPro"/>
</dbReference>
<dbReference type="GO" id="GO:0031720">
    <property type="term" value="F:haptoglobin binding"/>
    <property type="evidence" value="ECO:0007669"/>
    <property type="project" value="TreeGrafter"/>
</dbReference>
<dbReference type="GO" id="GO:0020037">
    <property type="term" value="F:heme binding"/>
    <property type="evidence" value="ECO:0007669"/>
    <property type="project" value="InterPro"/>
</dbReference>
<dbReference type="GO" id="GO:0005506">
    <property type="term" value="F:iron ion binding"/>
    <property type="evidence" value="ECO:0007669"/>
    <property type="project" value="InterPro"/>
</dbReference>
<dbReference type="GO" id="GO:0043177">
    <property type="term" value="F:organic acid binding"/>
    <property type="evidence" value="ECO:0007669"/>
    <property type="project" value="TreeGrafter"/>
</dbReference>
<dbReference type="GO" id="GO:0019825">
    <property type="term" value="F:oxygen binding"/>
    <property type="evidence" value="ECO:0007669"/>
    <property type="project" value="InterPro"/>
</dbReference>
<dbReference type="GO" id="GO:0005344">
    <property type="term" value="F:oxygen carrier activity"/>
    <property type="evidence" value="ECO:0007669"/>
    <property type="project" value="UniProtKB-KW"/>
</dbReference>
<dbReference type="GO" id="GO:0004601">
    <property type="term" value="F:peroxidase activity"/>
    <property type="evidence" value="ECO:0007669"/>
    <property type="project" value="TreeGrafter"/>
</dbReference>
<dbReference type="GO" id="GO:0042744">
    <property type="term" value="P:hydrogen peroxide catabolic process"/>
    <property type="evidence" value="ECO:0007669"/>
    <property type="project" value="TreeGrafter"/>
</dbReference>
<dbReference type="CDD" id="cd08927">
    <property type="entry name" value="Hb-alpha-like"/>
    <property type="match status" value="1"/>
</dbReference>
<dbReference type="FunFam" id="1.10.490.10:FF:000002">
    <property type="entry name" value="Hemoglobin subunit alpha"/>
    <property type="match status" value="1"/>
</dbReference>
<dbReference type="Gene3D" id="1.10.490.10">
    <property type="entry name" value="Globins"/>
    <property type="match status" value="1"/>
</dbReference>
<dbReference type="InterPro" id="IPR000971">
    <property type="entry name" value="Globin"/>
</dbReference>
<dbReference type="InterPro" id="IPR009050">
    <property type="entry name" value="Globin-like_sf"/>
</dbReference>
<dbReference type="InterPro" id="IPR012292">
    <property type="entry name" value="Globin/Proto"/>
</dbReference>
<dbReference type="InterPro" id="IPR002338">
    <property type="entry name" value="Hemoglobin_a-typ"/>
</dbReference>
<dbReference type="InterPro" id="IPR050056">
    <property type="entry name" value="Hemoglobin_oxygen_transport"/>
</dbReference>
<dbReference type="InterPro" id="IPR002339">
    <property type="entry name" value="Hemoglobin_pi"/>
</dbReference>
<dbReference type="PANTHER" id="PTHR11442">
    <property type="entry name" value="HEMOGLOBIN FAMILY MEMBER"/>
    <property type="match status" value="1"/>
</dbReference>
<dbReference type="PANTHER" id="PTHR11442:SF48">
    <property type="entry name" value="HEMOGLOBIN SUBUNIT ALPHA"/>
    <property type="match status" value="1"/>
</dbReference>
<dbReference type="Pfam" id="PF00042">
    <property type="entry name" value="Globin"/>
    <property type="match status" value="1"/>
</dbReference>
<dbReference type="PRINTS" id="PR00612">
    <property type="entry name" value="ALPHAHAEM"/>
</dbReference>
<dbReference type="PRINTS" id="PR00815">
    <property type="entry name" value="PIHAEM"/>
</dbReference>
<dbReference type="SUPFAM" id="SSF46458">
    <property type="entry name" value="Globin-like"/>
    <property type="match status" value="1"/>
</dbReference>
<dbReference type="PROSITE" id="PS01033">
    <property type="entry name" value="GLOBIN"/>
    <property type="match status" value="1"/>
</dbReference>
<name>HBA_EULFU</name>
<evidence type="ECO:0000250" key="1">
    <source>
        <dbReference type="UniProtKB" id="P01942"/>
    </source>
</evidence>
<evidence type="ECO:0000250" key="2">
    <source>
        <dbReference type="UniProtKB" id="P01946"/>
    </source>
</evidence>
<evidence type="ECO:0000250" key="3">
    <source>
        <dbReference type="UniProtKB" id="P69905"/>
    </source>
</evidence>
<evidence type="ECO:0000255" key="4">
    <source>
        <dbReference type="PROSITE-ProRule" id="PRU00238"/>
    </source>
</evidence>